<gene>
    <name type="ordered locus">Os07g0613300</name>
    <name type="ordered locus">LOC_Os07g42180</name>
    <name type="ORF">OJ1003_H02.130</name>
    <name type="ORF">P0616D06.103</name>
</gene>
<organism>
    <name type="scientific">Oryza sativa subsp. japonica</name>
    <name type="common">Rice</name>
    <dbReference type="NCBI Taxonomy" id="39947"/>
    <lineage>
        <taxon>Eukaryota</taxon>
        <taxon>Viridiplantae</taxon>
        <taxon>Streptophyta</taxon>
        <taxon>Embryophyta</taxon>
        <taxon>Tracheophyta</taxon>
        <taxon>Spermatophyta</taxon>
        <taxon>Magnoliopsida</taxon>
        <taxon>Liliopsida</taxon>
        <taxon>Poales</taxon>
        <taxon>Poaceae</taxon>
        <taxon>BOP clade</taxon>
        <taxon>Oryzoideae</taxon>
        <taxon>Oryzeae</taxon>
        <taxon>Oryzinae</taxon>
        <taxon>Oryza</taxon>
        <taxon>Oryza sativa</taxon>
    </lineage>
</organism>
<reference key="1">
    <citation type="journal article" date="2005" name="Nature">
        <title>The map-based sequence of the rice genome.</title>
        <authorList>
            <consortium name="International rice genome sequencing project (IRGSP)"/>
        </authorList>
    </citation>
    <scope>NUCLEOTIDE SEQUENCE [LARGE SCALE GENOMIC DNA]</scope>
    <source>
        <strain>cv. Nipponbare</strain>
    </source>
</reference>
<reference key="2">
    <citation type="journal article" date="2008" name="Nucleic Acids Res.">
        <title>The rice annotation project database (RAP-DB): 2008 update.</title>
        <authorList>
            <consortium name="The rice annotation project (RAP)"/>
        </authorList>
    </citation>
    <scope>GENOME REANNOTATION</scope>
    <source>
        <strain>cv. Nipponbare</strain>
    </source>
</reference>
<reference key="3">
    <citation type="journal article" date="2013" name="Rice">
        <title>Improvement of the Oryza sativa Nipponbare reference genome using next generation sequence and optical map data.</title>
        <authorList>
            <person name="Kawahara Y."/>
            <person name="de la Bastide M."/>
            <person name="Hamilton J.P."/>
            <person name="Kanamori H."/>
            <person name="McCombie W.R."/>
            <person name="Ouyang S."/>
            <person name="Schwartz D.C."/>
            <person name="Tanaka T."/>
            <person name="Wu J."/>
            <person name="Zhou S."/>
            <person name="Childs K.L."/>
            <person name="Davidson R.M."/>
            <person name="Lin H."/>
            <person name="Quesada-Ocampo L."/>
            <person name="Vaillancourt B."/>
            <person name="Sakai H."/>
            <person name="Lee S.S."/>
            <person name="Kim J."/>
            <person name="Numa H."/>
            <person name="Itoh T."/>
            <person name="Buell C.R."/>
            <person name="Matsumoto T."/>
        </authorList>
    </citation>
    <scope>GENOME REANNOTATION</scope>
    <source>
        <strain>cv. Nipponbare</strain>
    </source>
</reference>
<reference key="4">
    <citation type="journal article" date="2003" name="Science">
        <title>Collection, mapping, and annotation of over 28,000 cDNA clones from japonica rice.</title>
        <authorList>
            <consortium name="The rice full-length cDNA consortium"/>
        </authorList>
    </citation>
    <scope>NUCLEOTIDE SEQUENCE [LARGE SCALE MRNA]</scope>
    <source>
        <strain>cv. Nipponbare</strain>
    </source>
</reference>
<reference key="5">
    <citation type="journal article" date="2008" name="Acta Biochim. Biophys. Sin.">
        <title>Expression and characterization of rice putative PAUSED gene.</title>
        <authorList>
            <person name="Yao C."/>
            <person name="Ge L."/>
            <person name="Li W."/>
            <person name="Zhao B."/>
            <person name="Li C."/>
            <person name="Ruan K."/>
            <person name="Lin H."/>
            <person name="Jin Y."/>
        </authorList>
    </citation>
    <scope>FUNCTION</scope>
    <scope>SUBCELLULAR LOCATION</scope>
    <scope>TISSUE SPECIFICITY</scope>
    <scope>DISRUPTION PHENOTYPE</scope>
    <source>
        <strain>cv. Dongjin</strain>
    </source>
</reference>
<protein>
    <recommendedName>
        <fullName>Exportin-T</fullName>
    </recommendedName>
    <alternativeName>
        <fullName>Exportin(tRNA)</fullName>
    </alternativeName>
    <alternativeName>
        <fullName>Protein PAUSED homolog</fullName>
    </alternativeName>
    <alternativeName>
        <fullName>tRNA exportin</fullName>
    </alternativeName>
</protein>
<name>XPOT_ORYSJ</name>
<sequence>MDDLEQAILLASDSPAAAAASPAVRAEALAYCARARDETPPSSLLHLCLYGLASSPHAHVHFWCLQTIHDALLLRRRLALPDDLALLRSSLLSLAVSSNAASPPFLRNKLAQLLALLVRFEYPHVYPSYFLDLIPPSPPLPGPTDMFARVLVSLDDDLLSQDYPRNAEEASDAGRVKDAMRAQCVPQIARHWHEAAVSLRAADPAVAAVALDAARRCISWIDVSLVANDVFVPLLFDIALSPGSVAPLAAAAVGCLSAVAAKRMDARAKVALLRSLMSAQKGFGSPDSGLKMAHLVTAYAVEALECYRKLGSSDADGAAALEMLEEVLPAVFAAAESGDDDEVDSGSVLEFLSGYVSTMKAPTEKQLGHLGQILEVVRMQMSYDPVYRGHLDVLDKIGKEEEDLMAEQRKDLIALFRSICRVAPGATQLFIRGLLVTALSSAEVSVEDVEVALTLFYRLGEIVGEEEIRTGAGLIRELVPMLLSARFSCHTHRLVALVYLDTISRYIKFMQENDQYVPHLLTVFLDERGIHHQNAHVSCHAGYLLMRAIRLLKAKLVPYLDTILQSLQDALVQFTATDWANKDIKFSSSEDGSQIFEAVGLLIGIEEVSPDKQVQCLTALLNPLCQQIESLVMDAKAQGLEESSPRAIGLQQIIVALTMISKGFNERLVMGSRPTLGVMFKKTLDVVLQVLISFPNVKPLRSKIISFLHRMVEILGISVLPCIPIALRQLLVDNEAKDMSEFLYLINQIICKFKSSANALLEDVFPAIASHLSVILSHDAFSNGFASNTEEMRELQELEKRFYAFLLHIATHDLSTVLLTPSCRHYLENIMQLLLITSCSHKEISHRKTCVQTFVNLIKDWCSSSEIEDKLPGFRVFMIEKFATGCCLQSVLDKSFNFRDGISIALFGEIMMAQKVMYERFGENFVVNFVTKLREAHCPPDLAEQYYQKLQGNDIKAFKSFYESLVMKIRQQQNGSLVFR</sequence>
<feature type="chain" id="PRO_0000415613" description="Exportin-T">
    <location>
        <begin position="1"/>
        <end position="980"/>
    </location>
</feature>
<keyword id="KW-0963">Cytoplasm</keyword>
<keyword id="KW-0539">Nucleus</keyword>
<keyword id="KW-0675">Receptor</keyword>
<keyword id="KW-1185">Reference proteome</keyword>
<keyword id="KW-0694">RNA-binding</keyword>
<keyword id="KW-0813">Transport</keyword>
<keyword id="KW-0819">tRNA processing</keyword>
<keyword id="KW-0820">tRNA-binding</keyword>
<accession>Q8H3A7</accession>
<accession>A0A0P0X8S3</accession>
<accession>Q8GTZ0</accession>
<comment type="function">
    <text evidence="1">Probable tRNA nucleus export receptor which regulates tRNA processing and facilitates tRNA translocation across the nuclear pore complex. Is required for correct leaf initiation at different developmental stages and may play a role in floral patterning.</text>
</comment>
<comment type="subcellular location">
    <subcellularLocation>
        <location evidence="1">Nucleus</location>
    </subcellularLocation>
    <subcellularLocation>
        <location evidence="1">Cytoplasm</location>
    </subcellularLocation>
    <text evidence="2">Shuttles between the nucleus and the cytoplasm.</text>
</comment>
<comment type="tissue specificity">
    <text evidence="1">Expressed in roots, stems, leaves, flowers and embryos.</text>
</comment>
<comment type="disruption phenotype">
    <text evidence="1">Reduced size in non-mature plants, delayed panicle heading, reduced seed number and low seed fertility.</text>
</comment>
<comment type="similarity">
    <text evidence="2">Belongs to the exportin family.</text>
</comment>
<dbReference type="EMBL" id="AP003700">
    <property type="protein sequence ID" value="BAC79501.1"/>
    <property type="molecule type" value="Genomic_DNA"/>
</dbReference>
<dbReference type="EMBL" id="AP005198">
    <property type="protein sequence ID" value="BAC16491.1"/>
    <property type="molecule type" value="Genomic_DNA"/>
</dbReference>
<dbReference type="EMBL" id="AP008213">
    <property type="protein sequence ID" value="BAF22169.1"/>
    <property type="molecule type" value="Genomic_DNA"/>
</dbReference>
<dbReference type="EMBL" id="AP014963">
    <property type="protein sequence ID" value="BAT02623.1"/>
    <property type="molecule type" value="Genomic_DNA"/>
</dbReference>
<dbReference type="EMBL" id="AK067398">
    <property type="protein sequence ID" value="BAG90402.1"/>
    <property type="molecule type" value="mRNA"/>
</dbReference>
<dbReference type="RefSeq" id="XP_015647679.1">
    <property type="nucleotide sequence ID" value="XM_015792193.1"/>
</dbReference>
<dbReference type="SMR" id="Q8H3A7"/>
<dbReference type="FunCoup" id="Q8H3A7">
    <property type="interactions" value="2629"/>
</dbReference>
<dbReference type="STRING" id="39947.Q8H3A7"/>
<dbReference type="PaxDb" id="39947-Q8H3A7"/>
<dbReference type="EnsemblPlants" id="Os07t0613300-01">
    <property type="protein sequence ID" value="Os07t0613300-01"/>
    <property type="gene ID" value="Os07g0613300"/>
</dbReference>
<dbReference type="EnsemblPlants" id="Os07t0613300-02">
    <property type="protein sequence ID" value="Os07t0613300-02"/>
    <property type="gene ID" value="Os07g0613300"/>
</dbReference>
<dbReference type="Gramene" id="Os07t0613300-01">
    <property type="protein sequence ID" value="Os07t0613300-01"/>
    <property type="gene ID" value="Os07g0613300"/>
</dbReference>
<dbReference type="Gramene" id="Os07t0613300-02">
    <property type="protein sequence ID" value="Os07t0613300-02"/>
    <property type="gene ID" value="Os07g0613300"/>
</dbReference>
<dbReference type="KEGG" id="dosa:Os07g0613300"/>
<dbReference type="eggNOG" id="KOG2021">
    <property type="taxonomic scope" value="Eukaryota"/>
</dbReference>
<dbReference type="HOGENOM" id="CLU_004414_1_1_1"/>
<dbReference type="InParanoid" id="Q8H3A7"/>
<dbReference type="OMA" id="HEMFLFG"/>
<dbReference type="OrthoDB" id="26399at2759"/>
<dbReference type="Proteomes" id="UP000000763">
    <property type="component" value="Chromosome 7"/>
</dbReference>
<dbReference type="Proteomes" id="UP000059680">
    <property type="component" value="Chromosome 7"/>
</dbReference>
<dbReference type="ExpressionAtlas" id="Q8H3A7">
    <property type="expression patterns" value="baseline and differential"/>
</dbReference>
<dbReference type="GO" id="GO:0005737">
    <property type="term" value="C:cytoplasm"/>
    <property type="evidence" value="ECO:0000318"/>
    <property type="project" value="GO_Central"/>
</dbReference>
<dbReference type="GO" id="GO:0016363">
    <property type="term" value="C:nuclear matrix"/>
    <property type="evidence" value="ECO:0000318"/>
    <property type="project" value="GO_Central"/>
</dbReference>
<dbReference type="GO" id="GO:0005643">
    <property type="term" value="C:nuclear pore"/>
    <property type="evidence" value="ECO:0000318"/>
    <property type="project" value="GO_Central"/>
</dbReference>
<dbReference type="GO" id="GO:0005049">
    <property type="term" value="F:nuclear export signal receptor activity"/>
    <property type="evidence" value="ECO:0007669"/>
    <property type="project" value="EnsemblPlants"/>
</dbReference>
<dbReference type="GO" id="GO:0031267">
    <property type="term" value="F:small GTPase binding"/>
    <property type="evidence" value="ECO:0007669"/>
    <property type="project" value="InterPro"/>
</dbReference>
<dbReference type="GO" id="GO:0000049">
    <property type="term" value="F:tRNA binding"/>
    <property type="evidence" value="ECO:0000318"/>
    <property type="project" value="GO_Central"/>
</dbReference>
<dbReference type="GO" id="GO:0009908">
    <property type="term" value="P:flower development"/>
    <property type="evidence" value="ECO:0007669"/>
    <property type="project" value="EnsemblPlants"/>
</dbReference>
<dbReference type="GO" id="GO:0010014">
    <property type="term" value="P:meristem initiation"/>
    <property type="evidence" value="ECO:0007669"/>
    <property type="project" value="EnsemblPlants"/>
</dbReference>
<dbReference type="GO" id="GO:0008033">
    <property type="term" value="P:tRNA processing"/>
    <property type="evidence" value="ECO:0007669"/>
    <property type="project" value="UniProtKB-KW"/>
</dbReference>
<dbReference type="GO" id="GO:0071528">
    <property type="term" value="P:tRNA re-export from nucleus"/>
    <property type="evidence" value="ECO:0000318"/>
    <property type="project" value="GO_Central"/>
</dbReference>
<dbReference type="FunFam" id="1.25.10.10:FF:000295">
    <property type="entry name" value="Exportin-T"/>
    <property type="match status" value="1"/>
</dbReference>
<dbReference type="Gene3D" id="1.25.10.10">
    <property type="entry name" value="Leucine-rich Repeat Variant"/>
    <property type="match status" value="1"/>
</dbReference>
<dbReference type="InterPro" id="IPR011989">
    <property type="entry name" value="ARM-like"/>
</dbReference>
<dbReference type="InterPro" id="IPR016024">
    <property type="entry name" value="ARM-type_fold"/>
</dbReference>
<dbReference type="InterPro" id="IPR013598">
    <property type="entry name" value="Exportin-1/Importin-b-like"/>
</dbReference>
<dbReference type="InterPro" id="IPR045546">
    <property type="entry name" value="Exportin-T_C"/>
</dbReference>
<dbReference type="InterPro" id="IPR040017">
    <property type="entry name" value="XPOT"/>
</dbReference>
<dbReference type="PANTHER" id="PTHR15952:SF11">
    <property type="entry name" value="EXPORTIN-T"/>
    <property type="match status" value="1"/>
</dbReference>
<dbReference type="PANTHER" id="PTHR15952">
    <property type="entry name" value="EXPORTIN-T/LOS1"/>
    <property type="match status" value="1"/>
</dbReference>
<dbReference type="Pfam" id="PF19282">
    <property type="entry name" value="Exportin-T"/>
    <property type="match status" value="1"/>
</dbReference>
<dbReference type="Pfam" id="PF08389">
    <property type="entry name" value="Xpo1"/>
    <property type="match status" value="1"/>
</dbReference>
<dbReference type="SUPFAM" id="SSF48371">
    <property type="entry name" value="ARM repeat"/>
    <property type="match status" value="1"/>
</dbReference>
<evidence type="ECO:0000269" key="1">
    <source>
    </source>
</evidence>
<evidence type="ECO:0000305" key="2"/>
<proteinExistence type="evidence at transcript level"/>